<keyword id="KW-0012">Acyltransferase</keyword>
<keyword id="KW-0903">Direct protein sequencing</keyword>
<keyword id="KW-0350">Heme biosynthesis</keyword>
<keyword id="KW-0472">Membrane</keyword>
<keyword id="KW-0496">Mitochondrion</keyword>
<keyword id="KW-0999">Mitochondrion inner membrane</keyword>
<keyword id="KW-0663">Pyridoxal phosphate</keyword>
<keyword id="KW-1185">Reference proteome</keyword>
<keyword id="KW-0808">Transferase</keyword>
<keyword id="KW-0809">Transit peptide</keyword>
<comment type="function">
    <text evidence="3 5">Catalyzes the pyridoxal 5'-phosphate (PLP)-dependent condensation of succinyl-CoA and glycine to form aminolevulinic acid (ALA), with CoA and CO2 as by-products (PubMed:8407861). Contributes significantly to heme formation during erythropoiesis (By similarity).</text>
</comment>
<comment type="catalytic activity">
    <reaction evidence="5">
        <text>succinyl-CoA + glycine + H(+) = 5-aminolevulinate + CO2 + CoA</text>
        <dbReference type="Rhea" id="RHEA:12921"/>
        <dbReference type="ChEBI" id="CHEBI:15378"/>
        <dbReference type="ChEBI" id="CHEBI:16526"/>
        <dbReference type="ChEBI" id="CHEBI:57287"/>
        <dbReference type="ChEBI" id="CHEBI:57292"/>
        <dbReference type="ChEBI" id="CHEBI:57305"/>
        <dbReference type="ChEBI" id="CHEBI:356416"/>
        <dbReference type="EC" id="2.3.1.37"/>
    </reaction>
    <physiologicalReaction direction="left-to-right" evidence="8">
        <dbReference type="Rhea" id="RHEA:12922"/>
    </physiologicalReaction>
</comment>
<comment type="cofactor">
    <cofactor evidence="3">
        <name>pyridoxal 5'-phosphate</name>
        <dbReference type="ChEBI" id="CHEBI:597326"/>
    </cofactor>
</comment>
<comment type="biophysicochemical properties">
    <kinetics>
        <KM evidence="5">6.5 mM for glycine</KM>
        <KM evidence="5">2 uM for succinyl-CoA</KM>
    </kinetics>
</comment>
<comment type="pathway">
    <text evidence="8">Porphyrin-containing compound metabolism; protoporphyrin-IX biosynthesis; 5-aminolevulinate from glycine: step 1/1.</text>
</comment>
<comment type="subunit">
    <text evidence="3">Homodimer. Interacts with SUCLA2.</text>
</comment>
<comment type="subcellular location">
    <subcellularLocation>
        <location evidence="4">Mitochondrion inner membrane</location>
        <topology evidence="7">Peripheral membrane protein</topology>
    </subcellularLocation>
    <text evidence="4">Localizes to the matrix side of the mitochondrion inner membrane.</text>
</comment>
<comment type="tissue specificity">
    <text evidence="8">Erythroid-specific.</text>
</comment>
<comment type="domain">
    <text evidence="3">C-terminus is a mobile self-inhibitory loop which interferes directly with active site.</text>
</comment>
<comment type="similarity">
    <text evidence="7">Belongs to the class-II pyridoxal-phosphate-dependent aminotransferase family.</text>
</comment>
<name>HEM0_RAT</name>
<gene>
    <name type="primary">Alas2</name>
    <name type="synonym">Alase</name>
</gene>
<sequence length="587" mass="64842">MVAAAMLLRSCPVLSKGPTGLLGKVAKTYQFLFGIGRCPILATQGPTCSQIHLKATKAGADSPSWTKSHCPFMLSELQDRKSKIVQRAAPEVQEDVKTFKTDLLSFMESTTRSQSVPRFQDPEQTGGAPPLLIQNNMTGSQAFGYDQFFRDKIMEKKQDHTYRVFKTVNRWANAYPFAQHFSEASMDSKDVSVWCSNDYLGISRHPRVLQAIEETLKNHGAGAGGTRNISGTSKFHVELEQELAELHHKDSALLFSSCFVANDSTLFTLAKLLPGCEIYSDAGNHASMIQGIRNSGAVKFVFRHNDPGHLKKLLEKSDPKTPKIVAFETVHSMDGAICPLEELCDVAHQYGALTFVDEVHAVGLYGTRGAGIGERDGIMHKLDIISGTLGKAFGCVGGYIASTRDLVDMVRSYAAGFIFTTSLPPMVLSGALESVRLLKGEEGQALRRAHQRNVKHMRQLLMDRGFPVIPCPSHIIPIRVGNAALNSKICDLLLAKHSIYVQAINYPTVPRGEELLRLAPSPHHSPQMMENFVEKLLLAWTEVGLPLQDVSVAACNFCRRPVHFELMSEWERSYFGNMGPQYVTTYA</sequence>
<organism>
    <name type="scientific">Rattus norvegicus</name>
    <name type="common">Rat</name>
    <dbReference type="NCBI Taxonomy" id="10116"/>
    <lineage>
        <taxon>Eukaryota</taxon>
        <taxon>Metazoa</taxon>
        <taxon>Chordata</taxon>
        <taxon>Craniata</taxon>
        <taxon>Vertebrata</taxon>
        <taxon>Euteleostomi</taxon>
        <taxon>Mammalia</taxon>
        <taxon>Eutheria</taxon>
        <taxon>Euarchontoglires</taxon>
        <taxon>Glires</taxon>
        <taxon>Rodentia</taxon>
        <taxon>Myomorpha</taxon>
        <taxon>Muroidea</taxon>
        <taxon>Muridae</taxon>
        <taxon>Murinae</taxon>
        <taxon>Rattus</taxon>
    </lineage>
</organism>
<dbReference type="EC" id="2.3.1.37" evidence="5"/>
<dbReference type="EMBL" id="D86297">
    <property type="protein sequence ID" value="BAA13063.1"/>
    <property type="molecule type" value="mRNA"/>
</dbReference>
<dbReference type="PIR" id="JX0278">
    <property type="entry name" value="JX0278"/>
</dbReference>
<dbReference type="RefSeq" id="NP_037329.1">
    <property type="nucleotide sequence ID" value="NM_013197.1"/>
</dbReference>
<dbReference type="SMR" id="Q63147"/>
<dbReference type="FunCoup" id="Q63147">
    <property type="interactions" value="375"/>
</dbReference>
<dbReference type="STRING" id="10116.ENSRNOP00000000180"/>
<dbReference type="GlyGen" id="Q63147">
    <property type="glycosylation" value="1 site"/>
</dbReference>
<dbReference type="PhosphoSitePlus" id="Q63147"/>
<dbReference type="PaxDb" id="10116-ENSRNOP00000000180"/>
<dbReference type="DNASU" id="25748"/>
<dbReference type="GeneID" id="25748"/>
<dbReference type="KEGG" id="rno:25748"/>
<dbReference type="AGR" id="RGD:2084"/>
<dbReference type="CTD" id="212"/>
<dbReference type="RGD" id="2084">
    <property type="gene designation" value="Alas2"/>
</dbReference>
<dbReference type="eggNOG" id="KOG1360">
    <property type="taxonomic scope" value="Eukaryota"/>
</dbReference>
<dbReference type="InParanoid" id="Q63147"/>
<dbReference type="OrthoDB" id="10263824at2759"/>
<dbReference type="PhylomeDB" id="Q63147"/>
<dbReference type="Reactome" id="R-RNO-189451">
    <property type="pathway name" value="Heme biosynthesis"/>
</dbReference>
<dbReference type="UniPathway" id="UPA00251">
    <property type="reaction ID" value="UER00375"/>
</dbReference>
<dbReference type="PRO" id="PR:Q63147"/>
<dbReference type="Proteomes" id="UP000002494">
    <property type="component" value="Unplaced"/>
</dbReference>
<dbReference type="GO" id="GO:0005743">
    <property type="term" value="C:mitochondrial inner membrane"/>
    <property type="evidence" value="ECO:0000250"/>
    <property type="project" value="UniProtKB"/>
</dbReference>
<dbReference type="GO" id="GO:0005759">
    <property type="term" value="C:mitochondrial matrix"/>
    <property type="evidence" value="ECO:0007669"/>
    <property type="project" value="InterPro"/>
</dbReference>
<dbReference type="GO" id="GO:0005739">
    <property type="term" value="C:mitochondrion"/>
    <property type="evidence" value="ECO:0000250"/>
    <property type="project" value="UniProtKB"/>
</dbReference>
<dbReference type="GO" id="GO:0003870">
    <property type="term" value="F:5-aminolevulinate synthase activity"/>
    <property type="evidence" value="ECO:0000314"/>
    <property type="project" value="UniProtKB"/>
</dbReference>
<dbReference type="GO" id="GO:0120225">
    <property type="term" value="F:coenzyme A binding"/>
    <property type="evidence" value="ECO:0000314"/>
    <property type="project" value="RGD"/>
</dbReference>
<dbReference type="GO" id="GO:0030170">
    <property type="term" value="F:pyridoxal phosphate binding"/>
    <property type="evidence" value="ECO:0007669"/>
    <property type="project" value="InterPro"/>
</dbReference>
<dbReference type="GO" id="GO:0048821">
    <property type="term" value="P:erythrocyte development"/>
    <property type="evidence" value="ECO:0000318"/>
    <property type="project" value="GO_Central"/>
</dbReference>
<dbReference type="GO" id="GO:0030218">
    <property type="term" value="P:erythrocyte differentiation"/>
    <property type="evidence" value="ECO:0000250"/>
    <property type="project" value="UniProtKB"/>
</dbReference>
<dbReference type="GO" id="GO:0006783">
    <property type="term" value="P:heme biosynthetic process"/>
    <property type="evidence" value="ECO:0000250"/>
    <property type="project" value="UniProtKB"/>
</dbReference>
<dbReference type="GO" id="GO:0042541">
    <property type="term" value="P:hemoglobin biosynthetic process"/>
    <property type="evidence" value="ECO:0000250"/>
    <property type="project" value="UniProtKB"/>
</dbReference>
<dbReference type="GO" id="GO:0006879">
    <property type="term" value="P:intracellular iron ion homeostasis"/>
    <property type="evidence" value="ECO:0000266"/>
    <property type="project" value="RGD"/>
</dbReference>
<dbReference type="GO" id="GO:0007595">
    <property type="term" value="P:lactation"/>
    <property type="evidence" value="ECO:0000270"/>
    <property type="project" value="RGD"/>
</dbReference>
<dbReference type="GO" id="GO:0097421">
    <property type="term" value="P:liver regeneration"/>
    <property type="evidence" value="ECO:0000270"/>
    <property type="project" value="RGD"/>
</dbReference>
<dbReference type="GO" id="GO:0060135">
    <property type="term" value="P:maternal process involved in female pregnancy"/>
    <property type="evidence" value="ECO:0000270"/>
    <property type="project" value="RGD"/>
</dbReference>
<dbReference type="GO" id="GO:0006782">
    <property type="term" value="P:protoporphyrinogen IX biosynthetic process"/>
    <property type="evidence" value="ECO:0007669"/>
    <property type="project" value="UniProtKB-UniPathway"/>
</dbReference>
<dbReference type="GO" id="GO:1901423">
    <property type="term" value="P:response to benzene"/>
    <property type="evidence" value="ECO:0000270"/>
    <property type="project" value="RGD"/>
</dbReference>
<dbReference type="GO" id="GO:0032025">
    <property type="term" value="P:response to cobalt ion"/>
    <property type="evidence" value="ECO:0000270"/>
    <property type="project" value="RGD"/>
</dbReference>
<dbReference type="GO" id="GO:0070542">
    <property type="term" value="P:response to fatty acid"/>
    <property type="evidence" value="ECO:0000270"/>
    <property type="project" value="RGD"/>
</dbReference>
<dbReference type="GO" id="GO:0001666">
    <property type="term" value="P:response to hypoxia"/>
    <property type="evidence" value="ECO:0000270"/>
    <property type="project" value="RGD"/>
</dbReference>
<dbReference type="GO" id="GO:0010288">
    <property type="term" value="P:response to lead ion"/>
    <property type="evidence" value="ECO:0000270"/>
    <property type="project" value="RGD"/>
</dbReference>
<dbReference type="GO" id="GO:0009410">
    <property type="term" value="P:response to xenobiotic stimulus"/>
    <property type="evidence" value="ECO:0000270"/>
    <property type="project" value="RGD"/>
</dbReference>
<dbReference type="CDD" id="cd06454">
    <property type="entry name" value="KBL_like"/>
    <property type="match status" value="1"/>
</dbReference>
<dbReference type="FunFam" id="3.90.1150.10:FF:000029">
    <property type="entry name" value="5-aminolevulinate synthase"/>
    <property type="match status" value="1"/>
</dbReference>
<dbReference type="FunFam" id="4.10.92.10:FF:000001">
    <property type="entry name" value="5-aminolevulinate synthase"/>
    <property type="match status" value="1"/>
</dbReference>
<dbReference type="FunFam" id="3.40.640.10:FF:000006">
    <property type="entry name" value="5-aminolevulinate synthase, mitochondrial"/>
    <property type="match status" value="1"/>
</dbReference>
<dbReference type="Gene3D" id="4.10.92.10">
    <property type="entry name" value="Aminolevulinic Acid Synthase 2"/>
    <property type="match status" value="1"/>
</dbReference>
<dbReference type="Gene3D" id="3.90.1150.10">
    <property type="entry name" value="Aspartate Aminotransferase, domain 1"/>
    <property type="match status" value="1"/>
</dbReference>
<dbReference type="Gene3D" id="3.40.640.10">
    <property type="entry name" value="Type I PLP-dependent aspartate aminotransferase-like (Major domain)"/>
    <property type="match status" value="1"/>
</dbReference>
<dbReference type="InterPro" id="IPR010961">
    <property type="entry name" value="4pyrrol_synth_NH2levulA_synth"/>
</dbReference>
<dbReference type="InterPro" id="IPR015118">
    <property type="entry name" value="5aminolev_synth_preseq"/>
</dbReference>
<dbReference type="InterPro" id="IPR001917">
    <property type="entry name" value="Aminotrans_II_pyridoxalP_BS"/>
</dbReference>
<dbReference type="InterPro" id="IPR004839">
    <property type="entry name" value="Aminotransferase_I/II_large"/>
</dbReference>
<dbReference type="InterPro" id="IPR050087">
    <property type="entry name" value="AON_synthase_class-II"/>
</dbReference>
<dbReference type="InterPro" id="IPR015424">
    <property type="entry name" value="PyrdxlP-dep_Trfase"/>
</dbReference>
<dbReference type="InterPro" id="IPR015421">
    <property type="entry name" value="PyrdxlP-dep_Trfase_major"/>
</dbReference>
<dbReference type="InterPro" id="IPR015422">
    <property type="entry name" value="PyrdxlP-dep_Trfase_small"/>
</dbReference>
<dbReference type="NCBIfam" id="TIGR01821">
    <property type="entry name" value="5aminolev_synth"/>
    <property type="match status" value="1"/>
</dbReference>
<dbReference type="PANTHER" id="PTHR13693:SF58">
    <property type="entry name" value="5-AMINOLEVULINATE SYNTHASE, ERYTHROID-SPECIFIC, MITOCHONDRIAL"/>
    <property type="match status" value="1"/>
</dbReference>
<dbReference type="PANTHER" id="PTHR13693">
    <property type="entry name" value="CLASS II AMINOTRANSFERASE/8-AMINO-7-OXONONANOATE SYNTHASE"/>
    <property type="match status" value="1"/>
</dbReference>
<dbReference type="Pfam" id="PF00155">
    <property type="entry name" value="Aminotran_1_2"/>
    <property type="match status" value="1"/>
</dbReference>
<dbReference type="Pfam" id="PF09029">
    <property type="entry name" value="Preseq_ALAS"/>
    <property type="match status" value="1"/>
</dbReference>
<dbReference type="SUPFAM" id="SSF53383">
    <property type="entry name" value="PLP-dependent transferases"/>
    <property type="match status" value="1"/>
</dbReference>
<dbReference type="PROSITE" id="PS00599">
    <property type="entry name" value="AA_TRANSFER_CLASS_2"/>
    <property type="match status" value="1"/>
</dbReference>
<feature type="transit peptide" description="Mitochondrion" evidence="3">
    <location>
        <begin position="1"/>
        <end position="49"/>
    </location>
</feature>
<feature type="chain" id="PRO_0000001225" description="5-aminolevulinate synthase, erythroid-specific, mitochondrial">
    <location>
        <begin position="50"/>
        <end position="587"/>
    </location>
</feature>
<feature type="active site" evidence="2">
    <location>
        <position position="391"/>
    </location>
</feature>
<feature type="binding site" evidence="2">
    <location>
        <position position="163"/>
    </location>
    <ligand>
        <name>succinyl-CoA</name>
        <dbReference type="ChEBI" id="CHEBI:57292"/>
    </ligand>
</feature>
<feature type="binding site" description="in other chain" evidence="3">
    <location>
        <position position="258"/>
    </location>
    <ligand>
        <name>pyridoxal 5'-phosphate</name>
        <dbReference type="ChEBI" id="CHEBI:597326"/>
        <note>ligand shared between dimeric partners</note>
    </ligand>
</feature>
<feature type="binding site" description="in other chain" evidence="3">
    <location>
        <position position="259"/>
    </location>
    <ligand>
        <name>pyridoxal 5'-phosphate</name>
        <dbReference type="ChEBI" id="CHEBI:597326"/>
        <note>ligand shared between dimeric partners</note>
    </ligand>
</feature>
<feature type="binding site" evidence="2">
    <location>
        <position position="280"/>
    </location>
    <ligand>
        <name>succinyl-CoA</name>
        <dbReference type="ChEBI" id="CHEBI:57292"/>
    </ligand>
</feature>
<feature type="binding site" evidence="2">
    <location>
        <position position="299"/>
    </location>
    <ligand>
        <name>succinyl-CoA</name>
        <dbReference type="ChEBI" id="CHEBI:57292"/>
    </ligand>
</feature>
<feature type="binding site" description="in other chain" evidence="2">
    <location>
        <position position="332"/>
    </location>
    <ligand>
        <name>pyridoxal 5'-phosphate</name>
        <dbReference type="ChEBI" id="CHEBI:597326"/>
        <note>ligand shared between dimeric partners</note>
    </ligand>
</feature>
<feature type="binding site" description="in other chain" evidence="3">
    <location>
        <position position="360"/>
    </location>
    <ligand>
        <name>pyridoxal 5'-phosphate</name>
        <dbReference type="ChEBI" id="CHEBI:597326"/>
        <note>ligand shared between dimeric partners</note>
    </ligand>
</feature>
<feature type="binding site" description="in other chain" evidence="3">
    <location>
        <position position="388"/>
    </location>
    <ligand>
        <name>pyridoxal 5'-phosphate</name>
        <dbReference type="ChEBI" id="CHEBI:597326"/>
        <note>ligand shared between dimeric partners</note>
    </ligand>
</feature>
<feature type="binding site" evidence="3">
    <location>
        <position position="420"/>
    </location>
    <ligand>
        <name>pyridoxal 5'-phosphate</name>
        <dbReference type="ChEBI" id="CHEBI:597326"/>
        <note>ligand shared between dimeric partners</note>
    </ligand>
</feature>
<feature type="binding site" evidence="3">
    <location>
        <position position="421"/>
    </location>
    <ligand>
        <name>pyridoxal 5'-phosphate</name>
        <dbReference type="ChEBI" id="CHEBI:597326"/>
        <note>ligand shared between dimeric partners</note>
    </ligand>
</feature>
<feature type="binding site" evidence="2">
    <location>
        <position position="508"/>
    </location>
    <ligand>
        <name>succinyl-CoA</name>
        <dbReference type="ChEBI" id="CHEBI:57292"/>
    </ligand>
</feature>
<feature type="modified residue" description="N6-(pyridoxal phosphate)lysine" evidence="1">
    <location>
        <position position="391"/>
    </location>
</feature>
<evidence type="ECO:0000250" key="1">
    <source>
        <dbReference type="UniProtKB" id="P08680"/>
    </source>
</evidence>
<evidence type="ECO:0000250" key="2">
    <source>
        <dbReference type="UniProtKB" id="P18079"/>
    </source>
</evidence>
<evidence type="ECO:0000250" key="3">
    <source>
        <dbReference type="UniProtKB" id="P22557"/>
    </source>
</evidence>
<evidence type="ECO:0000269" key="4">
    <source>
    </source>
</evidence>
<evidence type="ECO:0000269" key="5">
    <source>
    </source>
</evidence>
<evidence type="ECO:0000303" key="6">
    <source>
    </source>
</evidence>
<evidence type="ECO:0000305" key="7"/>
<evidence type="ECO:0000305" key="8">
    <source>
    </source>
</evidence>
<reference key="1">
    <citation type="journal article" date="1993" name="J. Biochem.">
        <title>Purification and structure of rat erythroid-specific delta-aminolevulinate synthase.</title>
        <authorList>
            <person name="Munakata H."/>
            <person name="Yamagami T."/>
            <person name="Nagai T."/>
            <person name="Yamamoto M."/>
            <person name="Hayashi N."/>
        </authorList>
    </citation>
    <scope>NUCLEOTIDE SEQUENCE [MRNA]</scope>
    <scope>PARTIAL PROTEIN SEQUENCE</scope>
    <scope>FUNCTION</scope>
    <scope>TISSUE SPECIFICITY</scope>
    <scope>CATALYTIC ACTIVITY</scope>
    <scope>BIOPHYSICOCHEMICAL PROPERTIES</scope>
</reference>
<reference key="2">
    <citation type="submission" date="1996-06" db="EMBL/GenBank/DDBJ databases">
        <authorList>
            <person name="Furuyama K."/>
        </authorList>
    </citation>
    <scope>SEQUENCE REVISION</scope>
</reference>
<reference key="3">
    <citation type="journal article" date="1990" name="Arch. Biochem. Biophys.">
        <title>Immunocytochemical studies on the localization of 5-aminolevulinate synthase in rat liver.</title>
        <authorList>
            <person name="Rohde M."/>
            <person name="Srivastava G."/>
            <person name="Rylatt D.B."/>
            <person name="Bundesen P."/>
            <person name="Zamattia J."/>
            <person name="Crane D.I."/>
            <person name="May B.K."/>
        </authorList>
    </citation>
    <scope>SUBCELLULAR LOCATION</scope>
</reference>
<accession>Q63147</accession>
<accession>Q63895</accession>
<proteinExistence type="evidence at protein level"/>
<protein>
    <recommendedName>
        <fullName>5-aminolevulinate synthase, erythroid-specific, mitochondrial</fullName>
        <shortName evidence="6">ALAS-E</shortName>
        <ecNumber evidence="5">2.3.1.37</ecNumber>
    </recommendedName>
    <alternativeName>
        <fullName>5-aminolevulinic acid synthase 2</fullName>
    </alternativeName>
    <alternativeName>
        <fullName>Delta-ALA synthase 2</fullName>
    </alternativeName>
    <alternativeName>
        <fullName>Delta-aminolevulinate synthase 2</fullName>
    </alternativeName>
</protein>